<feature type="chain" id="PRO_0000198617" description="Ribulose bisphosphate carboxylase small subunit">
    <location>
        <begin position="1"/>
        <end position="109"/>
    </location>
</feature>
<proteinExistence type="inferred from homology"/>
<dbReference type="EMBL" id="X57359">
    <property type="protein sequence ID" value="CAA40633.1"/>
    <property type="molecule type" value="Genomic_DNA"/>
</dbReference>
<dbReference type="PIR" id="S16437">
    <property type="entry name" value="S16437"/>
</dbReference>
<dbReference type="RefSeq" id="WP_016922907.1">
    <property type="nucleotide sequence ID" value="NZ_JBEIME010000560.1"/>
</dbReference>
<dbReference type="SMR" id="P27569"/>
<dbReference type="GO" id="GO:0031470">
    <property type="term" value="C:carboxysome"/>
    <property type="evidence" value="ECO:0007669"/>
    <property type="project" value="UniProtKB-SubCell"/>
</dbReference>
<dbReference type="GO" id="GO:0016984">
    <property type="term" value="F:ribulose-bisphosphate carboxylase activity"/>
    <property type="evidence" value="ECO:0007669"/>
    <property type="project" value="UniProtKB-UniRule"/>
</dbReference>
<dbReference type="GO" id="GO:0009853">
    <property type="term" value="P:photorespiration"/>
    <property type="evidence" value="ECO:0007669"/>
    <property type="project" value="UniProtKB-KW"/>
</dbReference>
<dbReference type="GO" id="GO:0019253">
    <property type="term" value="P:reductive pentose-phosphate cycle"/>
    <property type="evidence" value="ECO:0007669"/>
    <property type="project" value="UniProtKB-UniRule"/>
</dbReference>
<dbReference type="CDD" id="cd03527">
    <property type="entry name" value="RuBisCO_small"/>
    <property type="match status" value="1"/>
</dbReference>
<dbReference type="Gene3D" id="3.30.190.10">
    <property type="entry name" value="Ribulose bisphosphate carboxylase, small subunit"/>
    <property type="match status" value="1"/>
</dbReference>
<dbReference type="HAMAP" id="MF_00859">
    <property type="entry name" value="RuBisCO_S_bact"/>
    <property type="match status" value="1"/>
</dbReference>
<dbReference type="InterPro" id="IPR024681">
    <property type="entry name" value="RuBisCO_ssu"/>
</dbReference>
<dbReference type="InterPro" id="IPR000894">
    <property type="entry name" value="RuBisCO_ssu_dom"/>
</dbReference>
<dbReference type="InterPro" id="IPR036385">
    <property type="entry name" value="RuBisCO_ssu_sf"/>
</dbReference>
<dbReference type="PANTHER" id="PTHR31262">
    <property type="entry name" value="RIBULOSE BISPHOSPHATE CARBOXYLASE SMALL CHAIN 1, CHLOROPLASTIC"/>
    <property type="match status" value="1"/>
</dbReference>
<dbReference type="PANTHER" id="PTHR31262:SF0">
    <property type="entry name" value="RIBULOSE BISPHOSPHATE CARBOXYLASE SMALL SUBUNIT, CHLOROPLASTIC 1"/>
    <property type="match status" value="1"/>
</dbReference>
<dbReference type="Pfam" id="PF00101">
    <property type="entry name" value="RuBisCO_small"/>
    <property type="match status" value="1"/>
</dbReference>
<dbReference type="PRINTS" id="PR00152">
    <property type="entry name" value="RUBISCOSMALL"/>
</dbReference>
<dbReference type="SMART" id="SM00961">
    <property type="entry name" value="RuBisCO_small"/>
    <property type="match status" value="1"/>
</dbReference>
<dbReference type="SUPFAM" id="SSF55239">
    <property type="entry name" value="RuBisCO, small subunit"/>
    <property type="match status" value="1"/>
</dbReference>
<gene>
    <name evidence="2" type="primary">cbbS</name>
    <name evidence="2" type="synonym">rbcS</name>
</gene>
<organism>
    <name type="scientific">Prochlorothrix hollandica</name>
    <dbReference type="NCBI Taxonomy" id="1223"/>
    <lineage>
        <taxon>Bacteria</taxon>
        <taxon>Bacillati</taxon>
        <taxon>Cyanobacteriota</taxon>
        <taxon>Cyanophyceae</taxon>
        <taxon>Prochlorotrichales</taxon>
        <taxon>Prochlorotrichaceae</taxon>
        <taxon>Prochlorothrix</taxon>
    </lineage>
</organism>
<name>RBS_PROHO</name>
<sequence>MKTLPKERRYETLSYLPPLSDQQIARQIEYMVREGYIPAVEFNEDSDATTCYWTMWKLPLFHATSTQEVLGEVRECRTEYPNCYIRVVGFDNIKQCQSVSFIVHKPNRY</sequence>
<evidence type="ECO:0000250" key="1">
    <source>
        <dbReference type="UniProtKB" id="Q31NB2"/>
    </source>
</evidence>
<evidence type="ECO:0000255" key="2">
    <source>
        <dbReference type="HAMAP-Rule" id="MF_00859"/>
    </source>
</evidence>
<protein>
    <recommendedName>
        <fullName evidence="2">Ribulose bisphosphate carboxylase small subunit</fullName>
        <shortName evidence="2">RuBisCO small subunit</shortName>
    </recommendedName>
</protein>
<comment type="function">
    <text evidence="2">RuBisCO catalyzes two reactions: the carboxylation of D-ribulose 1,5-bisphosphate, the primary event in carbon dioxide fixation, as well as the oxidative fragmentation of the pentose substrate in the photorespiration process. Both reactions occur simultaneously and in competition at the same active site. Although the small subunit is not catalytic it is essential for maximal activity.</text>
</comment>
<comment type="subunit">
    <text evidence="2">Heterohexadecamer of 8 large and 8 small subunits.</text>
</comment>
<comment type="subcellular location">
    <subcellularLocation>
        <location evidence="1 2">Carboxysome</location>
    </subcellularLocation>
</comment>
<comment type="miscellaneous">
    <text evidence="2">The basic functional RuBisCO is composed of a large chain homodimer in a 'head-to-tail' conformation. In form I RuBisCO this homodimer is arranged in a barrel-like tetramer with the small subunits forming a tetrameric 'cap' on each end of the 'barrel'.</text>
</comment>
<comment type="similarity">
    <text evidence="2">Belongs to the RuBisCO small chain family.</text>
</comment>
<reference key="1">
    <citation type="journal article" date="1991" name="J. Mol. Evol.">
        <title>Sequence analysis and phylogenetic reconstruction of the genes encoding the large and small subunits of ribulose-1,5-bisphosphate carboxylase/oxygenase from the chlorophyll b-containing prokaryote Prochlorothrix hollandica.</title>
        <authorList>
            <person name="Morden C.W."/>
            <person name="Golden S.S."/>
        </authorList>
    </citation>
    <scope>NUCLEOTIDE SEQUENCE [GENOMIC DNA]</scope>
</reference>
<accession>P27569</accession>
<keyword id="KW-1283">Bacterial microcompartment</keyword>
<keyword id="KW-0113">Calvin cycle</keyword>
<keyword id="KW-0120">Carbon dioxide fixation</keyword>
<keyword id="KW-1282">Carboxysome</keyword>
<keyword id="KW-0601">Photorespiration</keyword>
<keyword id="KW-0602">Photosynthesis</keyword>